<gene>
    <name type="primary">ALDH1</name>
</gene>
<sequence length="501" mass="54538">MSSSGMPDLPAPLTNIKIQHTKLFINNEWHESVSGKTFPVFNPATEEKICEVEEADKEDVDKAVKAAREAFQMGSPWRTMDASERGQLIYKLADLIERDRLLLATLESINAGKVFASAYLMDLDYCIKALRYCAGWADKIQGRTIPVDGEFFSYTRHEPIGVCGLIFPWNAPMILLACKIGPALCCGNTVIVKPAEQTPLTALHVASLIKEAGFPPGVVNIVPGYGPTAGAAISSHMDVDKVAFTGSTEVGKMIQEAAAKSNLKRVTLELGAKNPCIVFADADLDSAVEFAHQGVFTNQGQSCIAASKLFVEEAIYDEFVQRSVERAKKYVFGNPLTPGVNHGPQINKAQHNKIMELIESGKKEGAKLECGGGPWGNKGYFIQPTVFSNVTDDMRIAKEEIFGPVQQIMKFKSLDEVIKRANNTYYGLVAGVFTKDLDKAVTVSSALQAGTVWVNCYLAASAQSPAGGFKMSGHGREMGEYGIHEYTEVKTVTMKISEKNS</sequence>
<proteinExistence type="evidence at protein level"/>
<feature type="chain" id="PRO_0000056427" description="Aldehyde dehydrogenase, cytosolic 1">
    <location>
        <begin position="1"/>
        <end position="501"/>
    </location>
</feature>
<feature type="active site" description="Proton acceptor">
    <location>
        <position position="269"/>
    </location>
</feature>
<feature type="active site" description="Nucleophile">
    <location>
        <position position="303"/>
    </location>
</feature>
<feature type="binding site" evidence="2">
    <location>
        <begin position="246"/>
        <end position="251"/>
    </location>
    <ligand>
        <name>NAD(+)</name>
        <dbReference type="ChEBI" id="CHEBI:57540"/>
    </ligand>
</feature>
<feature type="site" description="Transition state stabilizer">
    <location>
        <position position="170"/>
    </location>
</feature>
<feature type="strand" evidence="4">
    <location>
        <begin position="22"/>
        <end position="25"/>
    </location>
</feature>
<feature type="strand" evidence="4">
    <location>
        <begin position="28"/>
        <end position="30"/>
    </location>
</feature>
<feature type="strand" evidence="4">
    <location>
        <begin position="37"/>
        <end position="41"/>
    </location>
</feature>
<feature type="turn" evidence="4">
    <location>
        <begin position="43"/>
        <end position="45"/>
    </location>
</feature>
<feature type="strand" evidence="4">
    <location>
        <begin position="48"/>
        <end position="53"/>
    </location>
</feature>
<feature type="helix" evidence="4">
    <location>
        <begin position="57"/>
        <end position="71"/>
    </location>
</feature>
<feature type="helix" evidence="4">
    <location>
        <begin position="76"/>
        <end position="79"/>
    </location>
</feature>
<feature type="helix" evidence="4">
    <location>
        <begin position="82"/>
        <end position="98"/>
    </location>
</feature>
<feature type="helix" evidence="4">
    <location>
        <begin position="100"/>
        <end position="111"/>
    </location>
</feature>
<feature type="helix" evidence="4">
    <location>
        <begin position="115"/>
        <end position="120"/>
    </location>
</feature>
<feature type="helix" evidence="4">
    <location>
        <begin position="122"/>
        <end position="136"/>
    </location>
</feature>
<feature type="helix" evidence="4">
    <location>
        <begin position="137"/>
        <end position="139"/>
    </location>
</feature>
<feature type="strand" evidence="4">
    <location>
        <begin position="142"/>
        <end position="145"/>
    </location>
</feature>
<feature type="strand" evidence="4">
    <location>
        <begin position="148"/>
        <end position="159"/>
    </location>
</feature>
<feature type="strand" evidence="4">
    <location>
        <begin position="162"/>
        <end position="166"/>
    </location>
</feature>
<feature type="helix" evidence="4">
    <location>
        <begin position="172"/>
        <end position="185"/>
    </location>
</feature>
<feature type="strand" evidence="4">
    <location>
        <begin position="189"/>
        <end position="193"/>
    </location>
</feature>
<feature type="helix" evidence="4">
    <location>
        <begin position="200"/>
        <end position="212"/>
    </location>
</feature>
<feature type="strand" evidence="4">
    <location>
        <begin position="218"/>
        <end position="221"/>
    </location>
</feature>
<feature type="turn" evidence="4">
    <location>
        <begin position="226"/>
        <end position="228"/>
    </location>
</feature>
<feature type="helix" evidence="4">
    <location>
        <begin position="229"/>
        <end position="234"/>
    </location>
</feature>
<feature type="strand" evidence="4">
    <location>
        <begin position="241"/>
        <end position="246"/>
    </location>
</feature>
<feature type="helix" evidence="4">
    <location>
        <begin position="248"/>
        <end position="260"/>
    </location>
</feature>
<feature type="strand" evidence="4">
    <location>
        <begin position="265"/>
        <end position="269"/>
    </location>
</feature>
<feature type="strand" evidence="4">
    <location>
        <begin position="274"/>
        <end position="278"/>
    </location>
</feature>
<feature type="helix" evidence="4">
    <location>
        <begin position="284"/>
        <end position="296"/>
    </location>
</feature>
<feature type="helix" evidence="4">
    <location>
        <begin position="297"/>
        <end position="300"/>
    </location>
</feature>
<feature type="strand" evidence="4">
    <location>
        <begin position="306"/>
        <end position="312"/>
    </location>
</feature>
<feature type="helix" evidence="4">
    <location>
        <begin position="313"/>
        <end position="326"/>
    </location>
</feature>
<feature type="helix" evidence="4">
    <location>
        <begin position="348"/>
        <end position="364"/>
    </location>
</feature>
<feature type="strand" evidence="4">
    <location>
        <begin position="367"/>
        <end position="370"/>
    </location>
</feature>
<feature type="strand" evidence="4">
    <location>
        <begin position="373"/>
        <end position="379"/>
    </location>
</feature>
<feature type="strand" evidence="4">
    <location>
        <begin position="385"/>
        <end position="390"/>
    </location>
</feature>
<feature type="helix" evidence="4">
    <location>
        <begin position="395"/>
        <end position="398"/>
    </location>
</feature>
<feature type="strand" evidence="4">
    <location>
        <begin position="403"/>
        <end position="411"/>
    </location>
</feature>
<feature type="helix" evidence="4">
    <location>
        <begin position="414"/>
        <end position="422"/>
    </location>
</feature>
<feature type="strand" evidence="4">
    <location>
        <begin position="423"/>
        <end position="425"/>
    </location>
</feature>
<feature type="strand" evidence="4">
    <location>
        <begin position="428"/>
        <end position="433"/>
    </location>
</feature>
<feature type="helix" evidence="4">
    <location>
        <begin position="437"/>
        <end position="446"/>
    </location>
</feature>
<feature type="strand" evidence="4">
    <location>
        <begin position="449"/>
        <end position="455"/>
    </location>
</feature>
<feature type="helix" evidence="4">
    <location>
        <begin position="470"/>
        <end position="472"/>
    </location>
</feature>
<feature type="strand" evidence="4">
    <location>
        <begin position="473"/>
        <end position="475"/>
    </location>
</feature>
<feature type="helix" evidence="4">
    <location>
        <begin position="479"/>
        <end position="483"/>
    </location>
</feature>
<feature type="helix" evidence="4">
    <location>
        <begin position="484"/>
        <end position="486"/>
    </location>
</feature>
<feature type="strand" evidence="4">
    <location>
        <begin position="487"/>
        <end position="495"/>
    </location>
</feature>
<accession>Q28399</accession>
<keyword id="KW-0002">3D-structure</keyword>
<keyword id="KW-0963">Cytoplasm</keyword>
<keyword id="KW-0520">NAD</keyword>
<keyword id="KW-0560">Oxidoreductase</keyword>
<organism>
    <name type="scientific">Elephantulus edwardii</name>
    <name type="common">Cape long-eared elephant shrew</name>
    <dbReference type="NCBI Taxonomy" id="28737"/>
    <lineage>
        <taxon>Eukaryota</taxon>
        <taxon>Metazoa</taxon>
        <taxon>Chordata</taxon>
        <taxon>Craniata</taxon>
        <taxon>Vertebrata</taxon>
        <taxon>Euteleostomi</taxon>
        <taxon>Mammalia</taxon>
        <taxon>Eutheria</taxon>
        <taxon>Afrotheria</taxon>
        <taxon>Macroscelidea</taxon>
        <taxon>Macroscelididae</taxon>
        <taxon>Elephantulus</taxon>
    </lineage>
</organism>
<evidence type="ECO:0000250" key="1"/>
<evidence type="ECO:0000269" key="2">
    <source>
    </source>
</evidence>
<evidence type="ECO:0000305" key="3"/>
<evidence type="ECO:0007829" key="4">
    <source>
        <dbReference type="PDB" id="1O9J"/>
    </source>
</evidence>
<reference key="1">
    <citation type="journal article" date="1996" name="J. Biol. Chem.">
        <title>A retinaldehyde dehydrogenase as a structural protein in a mammalian eye lens. Gene recruitment of eta-crystallin.</title>
        <authorList>
            <person name="Graham C."/>
            <person name="Hodin J."/>
            <person name="Wistow G."/>
        </authorList>
    </citation>
    <scope>NUCLEOTIDE SEQUENCE [MRNA]</scope>
    <source>
        <tissue>Lens</tissue>
    </source>
</reference>
<reference key="2">
    <citation type="journal article" date="2003" name="Biochemistry">
        <title>Crystal structure of eta-crystallin: adaptation of a class 1 aldehyde dehydrogenase for a new role in the eye lens.</title>
        <authorList>
            <person name="Bateman O.A."/>
            <person name="Purkiss A.G."/>
            <person name="van Montfort R."/>
            <person name="Slingsby C."/>
            <person name="Graham C."/>
            <person name="Wistow G."/>
        </authorList>
    </citation>
    <scope>X-RAY CRYSTALLOGRAPHY (2.4 ANGSTROMS) IN COMPLEX WITH NAD</scope>
    <scope>FUNCTION</scope>
    <scope>HOMOTETRAMERIZATION</scope>
</reference>
<comment type="function">
    <text evidence="2">Major component of the eye of elephant shrews, which in contrast to other mammals, possesses both a lens- and a non-lens class-1 aldehyde dehydrogenase 1. This eye-specific form is a structural protein of the lens and, in other part of the eye, serves as the major form of ALDH1. Can convert/oxidize retinaldehyde to retinoic acid.</text>
</comment>
<comment type="catalytic activity">
    <reaction>
        <text>an aldehyde + NAD(+) + H2O = a carboxylate + NADH + 2 H(+)</text>
        <dbReference type="Rhea" id="RHEA:16185"/>
        <dbReference type="ChEBI" id="CHEBI:15377"/>
        <dbReference type="ChEBI" id="CHEBI:15378"/>
        <dbReference type="ChEBI" id="CHEBI:17478"/>
        <dbReference type="ChEBI" id="CHEBI:29067"/>
        <dbReference type="ChEBI" id="CHEBI:57540"/>
        <dbReference type="ChEBI" id="CHEBI:57945"/>
        <dbReference type="EC" id="1.2.1.3"/>
    </reaction>
</comment>
<comment type="pathway">
    <text>Alcohol metabolism; ethanol degradation; acetate from ethanol: step 2/2.</text>
</comment>
<comment type="subunit">
    <text evidence="2">Homotetramer.</text>
</comment>
<comment type="subcellular location">
    <subcellularLocation>
        <location evidence="1">Cytoplasm</location>
    </subcellularLocation>
</comment>
<comment type="tissue specificity">
    <text>Eye specific, with very high expression in the lens.</text>
</comment>
<comment type="similarity">
    <text evidence="3">Belongs to the aldehyde dehydrogenase family.</text>
</comment>
<dbReference type="EC" id="1.2.1.3"/>
<dbReference type="EMBL" id="U02483">
    <property type="protein sequence ID" value="AAB60268.1"/>
    <property type="molecule type" value="mRNA"/>
</dbReference>
<dbReference type="RefSeq" id="NP_001277088.1">
    <property type="nucleotide sequence ID" value="NM_001290159.1"/>
</dbReference>
<dbReference type="PDB" id="1O9J">
    <property type="method" value="X-ray"/>
    <property type="resolution" value="2.40 A"/>
    <property type="chains" value="A/B/C/D=1-501"/>
</dbReference>
<dbReference type="PDBsum" id="1O9J"/>
<dbReference type="SMR" id="Q28399"/>
<dbReference type="MoonProt" id="Q28399"/>
<dbReference type="GeneID" id="102867337"/>
<dbReference type="CTD" id="102867337"/>
<dbReference type="OrthoDB" id="310895at2759"/>
<dbReference type="BRENDA" id="1.2.1.36">
    <property type="organism ID" value="7360"/>
</dbReference>
<dbReference type="UniPathway" id="UPA00780">
    <property type="reaction ID" value="UER00768"/>
</dbReference>
<dbReference type="EvolutionaryTrace" id="Q28399"/>
<dbReference type="GO" id="GO:0005737">
    <property type="term" value="C:cytoplasm"/>
    <property type="evidence" value="ECO:0007669"/>
    <property type="project" value="UniProtKB-SubCell"/>
</dbReference>
<dbReference type="GO" id="GO:0032991">
    <property type="term" value="C:protein-containing complex"/>
    <property type="evidence" value="ECO:0000314"/>
    <property type="project" value="UniProtKB"/>
</dbReference>
<dbReference type="GO" id="GO:0004029">
    <property type="term" value="F:aldehyde dehydrogenase (NAD+) activity"/>
    <property type="evidence" value="ECO:0007669"/>
    <property type="project" value="UniProtKB-EC"/>
</dbReference>
<dbReference type="GO" id="GO:0042802">
    <property type="term" value="F:identical protein binding"/>
    <property type="evidence" value="ECO:0000353"/>
    <property type="project" value="CAFA"/>
</dbReference>
<dbReference type="GO" id="GO:0051287">
    <property type="term" value="F:NAD binding"/>
    <property type="evidence" value="ECO:0000314"/>
    <property type="project" value="CAFA"/>
</dbReference>
<dbReference type="GO" id="GO:0001758">
    <property type="term" value="F:retinal dehydrogenase activity"/>
    <property type="evidence" value="ECO:0000314"/>
    <property type="project" value="CAFA"/>
</dbReference>
<dbReference type="GO" id="GO:0005198">
    <property type="term" value="F:structural molecule activity"/>
    <property type="evidence" value="ECO:0000314"/>
    <property type="project" value="UniProtKB"/>
</dbReference>
<dbReference type="GO" id="GO:0006068">
    <property type="term" value="P:ethanol catabolic process"/>
    <property type="evidence" value="ECO:0007669"/>
    <property type="project" value="UniProtKB-UniPathway"/>
</dbReference>
<dbReference type="GO" id="GO:0042574">
    <property type="term" value="P:retinal metabolic process"/>
    <property type="evidence" value="ECO:0000314"/>
    <property type="project" value="CAFA"/>
</dbReference>
<dbReference type="CDD" id="cd07141">
    <property type="entry name" value="ALDH_F1AB_F2_RALDH1"/>
    <property type="match status" value="1"/>
</dbReference>
<dbReference type="FunFam" id="3.40.605.10:FF:000029">
    <property type="entry name" value="Aldehyde dehydrogenase, mitochondrial"/>
    <property type="match status" value="1"/>
</dbReference>
<dbReference type="FunFam" id="3.40.309.10:FF:000001">
    <property type="entry name" value="Mitochondrial aldehyde dehydrogenase 2"/>
    <property type="match status" value="1"/>
</dbReference>
<dbReference type="Gene3D" id="3.40.605.10">
    <property type="entry name" value="Aldehyde Dehydrogenase, Chain A, domain 1"/>
    <property type="match status" value="1"/>
</dbReference>
<dbReference type="Gene3D" id="3.40.309.10">
    <property type="entry name" value="Aldehyde Dehydrogenase, Chain A, domain 2"/>
    <property type="match status" value="1"/>
</dbReference>
<dbReference type="InterPro" id="IPR016161">
    <property type="entry name" value="Ald_DH/histidinol_DH"/>
</dbReference>
<dbReference type="InterPro" id="IPR016163">
    <property type="entry name" value="Ald_DH_C"/>
</dbReference>
<dbReference type="InterPro" id="IPR016160">
    <property type="entry name" value="Ald_DH_CS_CYS"/>
</dbReference>
<dbReference type="InterPro" id="IPR016162">
    <property type="entry name" value="Ald_DH_N"/>
</dbReference>
<dbReference type="InterPro" id="IPR015590">
    <property type="entry name" value="Aldehyde_DH_dom"/>
</dbReference>
<dbReference type="PANTHER" id="PTHR11699">
    <property type="entry name" value="ALDEHYDE DEHYDROGENASE-RELATED"/>
    <property type="match status" value="1"/>
</dbReference>
<dbReference type="Pfam" id="PF00171">
    <property type="entry name" value="Aldedh"/>
    <property type="match status" value="1"/>
</dbReference>
<dbReference type="SUPFAM" id="SSF53720">
    <property type="entry name" value="ALDH-like"/>
    <property type="match status" value="1"/>
</dbReference>
<dbReference type="PROSITE" id="PS00070">
    <property type="entry name" value="ALDEHYDE_DEHYDR_CYS"/>
    <property type="match status" value="1"/>
</dbReference>
<protein>
    <recommendedName>
        <fullName>Aldehyde dehydrogenase, cytosolic 1</fullName>
        <ecNumber>1.2.1.3</ecNumber>
    </recommendedName>
    <alternativeName>
        <fullName>ALDH class 1</fullName>
    </alternativeName>
    <alternativeName>
        <fullName>ETA-crystallin</fullName>
    </alternativeName>
</protein>
<name>ALDH1_ELEED</name>